<reference key="1">
    <citation type="journal article" date="2002" name="Nucleic Acids Res.">
        <title>Genome sequence of Oceanobacillus iheyensis isolated from the Iheya Ridge and its unexpected adaptive capabilities to extreme environments.</title>
        <authorList>
            <person name="Takami H."/>
            <person name="Takaki Y."/>
            <person name="Uchiyama I."/>
        </authorList>
    </citation>
    <scope>NUCLEOTIDE SEQUENCE [LARGE SCALE GENOMIC DNA]</scope>
    <source>
        <strain>DSM 14371 / CIP 107618 / JCM 11309 / KCTC 3954 / HTE831</strain>
    </source>
</reference>
<dbReference type="EMBL" id="BA000028">
    <property type="protein sequence ID" value="BAC11957.1"/>
    <property type="molecule type" value="Genomic_DNA"/>
</dbReference>
<dbReference type="RefSeq" id="WP_011064403.1">
    <property type="nucleotide sequence ID" value="NC_004193.1"/>
</dbReference>
<dbReference type="SMR" id="Q8EU88"/>
<dbReference type="STRING" id="221109.gene:10732162"/>
<dbReference type="KEGG" id="oih:OB0001"/>
<dbReference type="eggNOG" id="COG0593">
    <property type="taxonomic scope" value="Bacteria"/>
</dbReference>
<dbReference type="HOGENOM" id="CLU_026910_3_1_9"/>
<dbReference type="OrthoDB" id="9807019at2"/>
<dbReference type="PhylomeDB" id="Q8EU88"/>
<dbReference type="Proteomes" id="UP000000822">
    <property type="component" value="Chromosome"/>
</dbReference>
<dbReference type="GO" id="GO:0005737">
    <property type="term" value="C:cytoplasm"/>
    <property type="evidence" value="ECO:0007669"/>
    <property type="project" value="UniProtKB-SubCell"/>
</dbReference>
<dbReference type="GO" id="GO:0005886">
    <property type="term" value="C:plasma membrane"/>
    <property type="evidence" value="ECO:0007669"/>
    <property type="project" value="TreeGrafter"/>
</dbReference>
<dbReference type="GO" id="GO:0005524">
    <property type="term" value="F:ATP binding"/>
    <property type="evidence" value="ECO:0007669"/>
    <property type="project" value="UniProtKB-UniRule"/>
</dbReference>
<dbReference type="GO" id="GO:0016887">
    <property type="term" value="F:ATP hydrolysis activity"/>
    <property type="evidence" value="ECO:0007669"/>
    <property type="project" value="InterPro"/>
</dbReference>
<dbReference type="GO" id="GO:0003688">
    <property type="term" value="F:DNA replication origin binding"/>
    <property type="evidence" value="ECO:0007669"/>
    <property type="project" value="UniProtKB-UniRule"/>
</dbReference>
<dbReference type="GO" id="GO:0008289">
    <property type="term" value="F:lipid binding"/>
    <property type="evidence" value="ECO:0007669"/>
    <property type="project" value="UniProtKB-KW"/>
</dbReference>
<dbReference type="GO" id="GO:0006270">
    <property type="term" value="P:DNA replication initiation"/>
    <property type="evidence" value="ECO:0007669"/>
    <property type="project" value="UniProtKB-UniRule"/>
</dbReference>
<dbReference type="GO" id="GO:0006275">
    <property type="term" value="P:regulation of DNA replication"/>
    <property type="evidence" value="ECO:0007669"/>
    <property type="project" value="UniProtKB-UniRule"/>
</dbReference>
<dbReference type="CDD" id="cd00009">
    <property type="entry name" value="AAA"/>
    <property type="match status" value="1"/>
</dbReference>
<dbReference type="CDD" id="cd06571">
    <property type="entry name" value="Bac_DnaA_C"/>
    <property type="match status" value="1"/>
</dbReference>
<dbReference type="FunFam" id="1.10.1750.10:FF:000003">
    <property type="entry name" value="Chromosomal replication initiator protein DnaA"/>
    <property type="match status" value="1"/>
</dbReference>
<dbReference type="FunFam" id="1.10.8.60:FF:000003">
    <property type="entry name" value="Chromosomal replication initiator protein DnaA"/>
    <property type="match status" value="1"/>
</dbReference>
<dbReference type="FunFam" id="3.40.50.300:FF:000150">
    <property type="entry name" value="Chromosomal replication initiator protein DnaA"/>
    <property type="match status" value="1"/>
</dbReference>
<dbReference type="Gene3D" id="1.10.1750.10">
    <property type="match status" value="1"/>
</dbReference>
<dbReference type="Gene3D" id="1.10.8.60">
    <property type="match status" value="1"/>
</dbReference>
<dbReference type="Gene3D" id="3.30.300.180">
    <property type="match status" value="1"/>
</dbReference>
<dbReference type="Gene3D" id="3.40.50.300">
    <property type="entry name" value="P-loop containing nucleotide triphosphate hydrolases"/>
    <property type="match status" value="1"/>
</dbReference>
<dbReference type="HAMAP" id="MF_00377">
    <property type="entry name" value="DnaA_bact"/>
    <property type="match status" value="1"/>
</dbReference>
<dbReference type="InterPro" id="IPR003593">
    <property type="entry name" value="AAA+_ATPase"/>
</dbReference>
<dbReference type="InterPro" id="IPR001957">
    <property type="entry name" value="Chromosome_initiator_DnaA"/>
</dbReference>
<dbReference type="InterPro" id="IPR020591">
    <property type="entry name" value="Chromosome_initiator_DnaA-like"/>
</dbReference>
<dbReference type="InterPro" id="IPR018312">
    <property type="entry name" value="Chromosome_initiator_DnaA_CS"/>
</dbReference>
<dbReference type="InterPro" id="IPR013159">
    <property type="entry name" value="DnaA_C"/>
</dbReference>
<dbReference type="InterPro" id="IPR013317">
    <property type="entry name" value="DnaA_dom"/>
</dbReference>
<dbReference type="InterPro" id="IPR024633">
    <property type="entry name" value="DnaA_N_dom"/>
</dbReference>
<dbReference type="InterPro" id="IPR038454">
    <property type="entry name" value="DnaA_N_sf"/>
</dbReference>
<dbReference type="InterPro" id="IPR027417">
    <property type="entry name" value="P-loop_NTPase"/>
</dbReference>
<dbReference type="InterPro" id="IPR010921">
    <property type="entry name" value="Trp_repressor/repl_initiator"/>
</dbReference>
<dbReference type="NCBIfam" id="TIGR00362">
    <property type="entry name" value="DnaA"/>
    <property type="match status" value="1"/>
</dbReference>
<dbReference type="NCBIfam" id="NF010686">
    <property type="entry name" value="PRK14086.1"/>
    <property type="match status" value="1"/>
</dbReference>
<dbReference type="PANTHER" id="PTHR30050">
    <property type="entry name" value="CHROMOSOMAL REPLICATION INITIATOR PROTEIN DNAA"/>
    <property type="match status" value="1"/>
</dbReference>
<dbReference type="PANTHER" id="PTHR30050:SF2">
    <property type="entry name" value="CHROMOSOMAL REPLICATION INITIATOR PROTEIN DNAA"/>
    <property type="match status" value="1"/>
</dbReference>
<dbReference type="Pfam" id="PF00308">
    <property type="entry name" value="Bac_DnaA"/>
    <property type="match status" value="1"/>
</dbReference>
<dbReference type="Pfam" id="PF08299">
    <property type="entry name" value="Bac_DnaA_C"/>
    <property type="match status" value="1"/>
</dbReference>
<dbReference type="Pfam" id="PF11638">
    <property type="entry name" value="DnaA_N"/>
    <property type="match status" value="1"/>
</dbReference>
<dbReference type="PRINTS" id="PR00051">
    <property type="entry name" value="DNAA"/>
</dbReference>
<dbReference type="SMART" id="SM00382">
    <property type="entry name" value="AAA"/>
    <property type="match status" value="1"/>
</dbReference>
<dbReference type="SMART" id="SM00760">
    <property type="entry name" value="Bac_DnaA_C"/>
    <property type="match status" value="1"/>
</dbReference>
<dbReference type="SUPFAM" id="SSF52540">
    <property type="entry name" value="P-loop containing nucleoside triphosphate hydrolases"/>
    <property type="match status" value="1"/>
</dbReference>
<dbReference type="SUPFAM" id="SSF48295">
    <property type="entry name" value="TrpR-like"/>
    <property type="match status" value="1"/>
</dbReference>
<dbReference type="PROSITE" id="PS01008">
    <property type="entry name" value="DNAA"/>
    <property type="match status" value="1"/>
</dbReference>
<name>DNAA_OCEIH</name>
<accession>Q8EU88</accession>
<sequence>MENIEELWSATLKKIEEKLSKPSFDTWLKNTKAEALEKDTLIISAPNEFARDWLENQYTNLISQMLLEVTGSELNTKFIIPDSLEEIEEQKPMPKPKQSTDTGDSPKSMLNSKYTFDTFVIGAGNRFAHAASLAVAEAPAKAYNPLFIYGGVGLGKTHLMHAIGHYVRDHNPNAKVVYLTSEKFTNEFINAIMDNKSNHFRNKYRNIDVLLIDDIQFIAGKESTQEEFFHTFNALHGESKQIIISSDRPPKEIPTLEDRLRSRFEWGLITDITPPDLETRIAILNKKAKAEGLDIPNEVMLYIANQINTNIRELEGALIRVVAYSSLVNQDIDASLAADALKDIIPSSKPKEITIPAIQEIVAERYHIRLEDFAAKKRTKSIAFPRQIAMYLSRELTDASLPKIGEEFGGRDHTTVIHAHEKISKMLEQDTELDRDIEELKEKLKSI</sequence>
<feature type="chain" id="PRO_0000114224" description="Chromosomal replication initiator protein DnaA">
    <location>
        <begin position="1"/>
        <end position="447"/>
    </location>
</feature>
<feature type="region of interest" description="Domain I, interacts with DnaA modulators" evidence="1">
    <location>
        <begin position="1"/>
        <end position="74"/>
    </location>
</feature>
<feature type="region of interest" description="Domain II" evidence="1">
    <location>
        <begin position="74"/>
        <end position="108"/>
    </location>
</feature>
<feature type="region of interest" description="Disordered" evidence="2">
    <location>
        <begin position="85"/>
        <end position="107"/>
    </location>
</feature>
<feature type="region of interest" description="Domain III, AAA+ region" evidence="1">
    <location>
        <begin position="109"/>
        <end position="325"/>
    </location>
</feature>
<feature type="region of interest" description="Domain IV, binds dsDNA" evidence="1">
    <location>
        <begin position="326"/>
        <end position="447"/>
    </location>
</feature>
<feature type="compositionally biased region" description="Polar residues" evidence="2">
    <location>
        <begin position="97"/>
        <end position="107"/>
    </location>
</feature>
<feature type="binding site" evidence="1">
    <location>
        <position position="153"/>
    </location>
    <ligand>
        <name>ATP</name>
        <dbReference type="ChEBI" id="CHEBI:30616"/>
    </ligand>
</feature>
<feature type="binding site" evidence="1">
    <location>
        <position position="155"/>
    </location>
    <ligand>
        <name>ATP</name>
        <dbReference type="ChEBI" id="CHEBI:30616"/>
    </ligand>
</feature>
<feature type="binding site" evidence="1">
    <location>
        <position position="156"/>
    </location>
    <ligand>
        <name>ATP</name>
        <dbReference type="ChEBI" id="CHEBI:30616"/>
    </ligand>
</feature>
<feature type="binding site" evidence="1">
    <location>
        <position position="157"/>
    </location>
    <ligand>
        <name>ATP</name>
        <dbReference type="ChEBI" id="CHEBI:30616"/>
    </ligand>
</feature>
<gene>
    <name evidence="1" type="primary">dnaA</name>
    <name type="ordered locus">OB0001</name>
</gene>
<protein>
    <recommendedName>
        <fullName evidence="1">Chromosomal replication initiator protein DnaA</fullName>
    </recommendedName>
</protein>
<comment type="function">
    <text evidence="1">Plays an essential role in the initiation and regulation of chromosomal replication. ATP-DnaA binds to the origin of replication (oriC) to initiate formation of the DNA replication initiation complex once per cell cycle. Binds the DnaA box (a 9 base pair repeat at the origin) and separates the double-stranded (ds)DNA. Forms a right-handed helical filament on oriC DNA; dsDNA binds to the exterior of the filament while single-stranded (ss)DNA is stabiized in the filament's interior. The ATP-DnaA-oriC complex binds and stabilizes one strand of the AT-rich DNA unwinding element (DUE), permitting loading of DNA polymerase. After initiation quickly degrades to an ADP-DnaA complex that is not apt for DNA replication. Binds acidic phospholipids.</text>
</comment>
<comment type="subunit">
    <text evidence="1">Oligomerizes as a right-handed, spiral filament on DNA at oriC.</text>
</comment>
<comment type="subcellular location">
    <subcellularLocation>
        <location evidence="1">Cytoplasm</location>
    </subcellularLocation>
</comment>
<comment type="domain">
    <text evidence="1">Domain I is involved in oligomerization and binding regulators, domain II is flexibile and of varying length in different bacteria, domain III forms the AAA+ region, while domain IV binds dsDNA.</text>
</comment>
<comment type="similarity">
    <text evidence="1">Belongs to the DnaA family.</text>
</comment>
<evidence type="ECO:0000255" key="1">
    <source>
        <dbReference type="HAMAP-Rule" id="MF_00377"/>
    </source>
</evidence>
<evidence type="ECO:0000256" key="2">
    <source>
        <dbReference type="SAM" id="MobiDB-lite"/>
    </source>
</evidence>
<keyword id="KW-0067">ATP-binding</keyword>
<keyword id="KW-0963">Cytoplasm</keyword>
<keyword id="KW-0235">DNA replication</keyword>
<keyword id="KW-0238">DNA-binding</keyword>
<keyword id="KW-0446">Lipid-binding</keyword>
<keyword id="KW-0547">Nucleotide-binding</keyword>
<keyword id="KW-1185">Reference proteome</keyword>
<organism>
    <name type="scientific">Oceanobacillus iheyensis (strain DSM 14371 / CIP 107618 / JCM 11309 / KCTC 3954 / HTE831)</name>
    <dbReference type="NCBI Taxonomy" id="221109"/>
    <lineage>
        <taxon>Bacteria</taxon>
        <taxon>Bacillati</taxon>
        <taxon>Bacillota</taxon>
        <taxon>Bacilli</taxon>
        <taxon>Bacillales</taxon>
        <taxon>Bacillaceae</taxon>
        <taxon>Oceanobacillus</taxon>
    </lineage>
</organism>
<proteinExistence type="inferred from homology"/>